<proteinExistence type="inferred from homology"/>
<name>RNPA_AROAE</name>
<feature type="chain" id="PRO_0000198416" description="Ribonuclease P protein component">
    <location>
        <begin position="1"/>
        <end position="119"/>
    </location>
</feature>
<reference key="1">
    <citation type="journal article" date="2005" name="Arch. Microbiol.">
        <title>The genome sequence of an anaerobic aromatic-degrading denitrifying bacterium, strain EbN1.</title>
        <authorList>
            <person name="Rabus R."/>
            <person name="Kube M."/>
            <person name="Heider J."/>
            <person name="Beck A."/>
            <person name="Heitmann K."/>
            <person name="Widdel F."/>
            <person name="Reinhardt R."/>
        </authorList>
    </citation>
    <scope>NUCLEOTIDE SEQUENCE [LARGE SCALE GENOMIC DNA]</scope>
    <source>
        <strain>DSM 19018 / LMG 30748 / EbN1</strain>
    </source>
</reference>
<protein>
    <recommendedName>
        <fullName evidence="1">Ribonuclease P protein component</fullName>
        <shortName evidence="1">RNase P protein</shortName>
        <shortName evidence="1">RNaseP protein</shortName>
        <ecNumber evidence="1">3.1.26.5</ecNumber>
    </recommendedName>
    <alternativeName>
        <fullName evidence="1">Protein C5</fullName>
    </alternativeName>
</protein>
<accession>Q5P4P2</accession>
<comment type="function">
    <text evidence="1">RNaseP catalyzes the removal of the 5'-leader sequence from pre-tRNA to produce the mature 5'-terminus. It can also cleave other RNA substrates such as 4.5S RNA. The protein component plays an auxiliary but essential role in vivo by binding to the 5'-leader sequence and broadening the substrate specificity of the ribozyme.</text>
</comment>
<comment type="catalytic activity">
    <reaction evidence="1">
        <text>Endonucleolytic cleavage of RNA, removing 5'-extranucleotides from tRNA precursor.</text>
        <dbReference type="EC" id="3.1.26.5"/>
    </reaction>
</comment>
<comment type="subunit">
    <text evidence="1">Consists of a catalytic RNA component (M1 or rnpB) and a protein subunit.</text>
</comment>
<comment type="similarity">
    <text evidence="1">Belongs to the RnpA family.</text>
</comment>
<sequence>MSSRPGVDQRFLDAYRLRKTDEYSSVFAFRRAFKGRFFIAHYRPNELGTARLGVVIAKKLAKRANVRNLLKRIVREQFRKARPALAHHDLVVRLHVPVKMATRAMINDDVVNLLGRFRE</sequence>
<dbReference type="EC" id="3.1.26.5" evidence="1"/>
<dbReference type="EMBL" id="CR555306">
    <property type="protein sequence ID" value="CAI07720.1"/>
    <property type="molecule type" value="Genomic_DNA"/>
</dbReference>
<dbReference type="SMR" id="Q5P4P2"/>
<dbReference type="STRING" id="76114.ebB90"/>
<dbReference type="KEGG" id="eba:ebB90"/>
<dbReference type="eggNOG" id="COG0594">
    <property type="taxonomic scope" value="Bacteria"/>
</dbReference>
<dbReference type="HOGENOM" id="CLU_117179_11_2_4"/>
<dbReference type="OrthoDB" id="398329at2"/>
<dbReference type="Proteomes" id="UP000006552">
    <property type="component" value="Chromosome"/>
</dbReference>
<dbReference type="GO" id="GO:0030677">
    <property type="term" value="C:ribonuclease P complex"/>
    <property type="evidence" value="ECO:0007669"/>
    <property type="project" value="TreeGrafter"/>
</dbReference>
<dbReference type="GO" id="GO:0042781">
    <property type="term" value="F:3'-tRNA processing endoribonuclease activity"/>
    <property type="evidence" value="ECO:0007669"/>
    <property type="project" value="TreeGrafter"/>
</dbReference>
<dbReference type="GO" id="GO:0004526">
    <property type="term" value="F:ribonuclease P activity"/>
    <property type="evidence" value="ECO:0007669"/>
    <property type="project" value="UniProtKB-UniRule"/>
</dbReference>
<dbReference type="GO" id="GO:0000049">
    <property type="term" value="F:tRNA binding"/>
    <property type="evidence" value="ECO:0007669"/>
    <property type="project" value="UniProtKB-UniRule"/>
</dbReference>
<dbReference type="GO" id="GO:0001682">
    <property type="term" value="P:tRNA 5'-leader removal"/>
    <property type="evidence" value="ECO:0007669"/>
    <property type="project" value="UniProtKB-UniRule"/>
</dbReference>
<dbReference type="Gene3D" id="3.30.230.10">
    <property type="match status" value="1"/>
</dbReference>
<dbReference type="HAMAP" id="MF_00227">
    <property type="entry name" value="RNase_P"/>
    <property type="match status" value="1"/>
</dbReference>
<dbReference type="InterPro" id="IPR020568">
    <property type="entry name" value="Ribosomal_Su5_D2-typ_SF"/>
</dbReference>
<dbReference type="InterPro" id="IPR014721">
    <property type="entry name" value="Ribsml_uS5_D2-typ_fold_subgr"/>
</dbReference>
<dbReference type="InterPro" id="IPR000100">
    <property type="entry name" value="RNase_P"/>
</dbReference>
<dbReference type="InterPro" id="IPR020539">
    <property type="entry name" value="RNase_P_CS"/>
</dbReference>
<dbReference type="NCBIfam" id="TIGR00188">
    <property type="entry name" value="rnpA"/>
    <property type="match status" value="1"/>
</dbReference>
<dbReference type="PANTHER" id="PTHR33992">
    <property type="entry name" value="RIBONUCLEASE P PROTEIN COMPONENT"/>
    <property type="match status" value="1"/>
</dbReference>
<dbReference type="PANTHER" id="PTHR33992:SF1">
    <property type="entry name" value="RIBONUCLEASE P PROTEIN COMPONENT"/>
    <property type="match status" value="1"/>
</dbReference>
<dbReference type="Pfam" id="PF00825">
    <property type="entry name" value="Ribonuclease_P"/>
    <property type="match status" value="1"/>
</dbReference>
<dbReference type="SUPFAM" id="SSF54211">
    <property type="entry name" value="Ribosomal protein S5 domain 2-like"/>
    <property type="match status" value="1"/>
</dbReference>
<dbReference type="PROSITE" id="PS00648">
    <property type="entry name" value="RIBONUCLEASE_P"/>
    <property type="match status" value="1"/>
</dbReference>
<gene>
    <name evidence="1" type="primary">rnpA</name>
    <name type="ordered locus">AZOSEA15950</name>
    <name type="ORF">ebB90</name>
</gene>
<evidence type="ECO:0000255" key="1">
    <source>
        <dbReference type="HAMAP-Rule" id="MF_00227"/>
    </source>
</evidence>
<keyword id="KW-0255">Endonuclease</keyword>
<keyword id="KW-0378">Hydrolase</keyword>
<keyword id="KW-0540">Nuclease</keyword>
<keyword id="KW-1185">Reference proteome</keyword>
<keyword id="KW-0694">RNA-binding</keyword>
<keyword id="KW-0819">tRNA processing</keyword>
<organism>
    <name type="scientific">Aromatoleum aromaticum (strain DSM 19018 / LMG 30748 / EbN1)</name>
    <name type="common">Azoarcus sp. (strain EbN1)</name>
    <dbReference type="NCBI Taxonomy" id="76114"/>
    <lineage>
        <taxon>Bacteria</taxon>
        <taxon>Pseudomonadati</taxon>
        <taxon>Pseudomonadota</taxon>
        <taxon>Betaproteobacteria</taxon>
        <taxon>Rhodocyclales</taxon>
        <taxon>Rhodocyclaceae</taxon>
        <taxon>Aromatoleum</taxon>
    </lineage>
</organism>